<name>CLOA_CLAFS</name>
<keyword id="KW-0325">Glycoprotein</keyword>
<keyword id="KW-0349">Heme</keyword>
<keyword id="KW-0408">Iron</keyword>
<keyword id="KW-0472">Membrane</keyword>
<keyword id="KW-0479">Metal-binding</keyword>
<keyword id="KW-0812">Transmembrane</keyword>
<keyword id="KW-1133">Transmembrane helix</keyword>
<protein>
    <recommendedName>
        <fullName evidence="6">Inactive cytochrome P450 monooxygenase cloA</fullName>
    </recommendedName>
    <alternativeName>
        <fullName evidence="6">Ergot alkaloid synthesis protein cloA</fullName>
    </alternativeName>
    <alternativeName>
        <fullName evidence="6">Inactive clavine oxidase</fullName>
        <shortName evidence="6">CLOA</shortName>
    </alternativeName>
</protein>
<dbReference type="EMBL" id="EU006773">
    <property type="protein sequence ID" value="ABV57820.1"/>
    <property type="molecule type" value="Genomic_DNA"/>
</dbReference>
<dbReference type="SMR" id="A8C7R4"/>
<dbReference type="GlyCosmos" id="A8C7R4">
    <property type="glycosylation" value="2 sites, No reported glycans"/>
</dbReference>
<dbReference type="GO" id="GO:0016020">
    <property type="term" value="C:membrane"/>
    <property type="evidence" value="ECO:0007669"/>
    <property type="project" value="UniProtKB-SubCell"/>
</dbReference>
<dbReference type="GO" id="GO:0020037">
    <property type="term" value="F:heme binding"/>
    <property type="evidence" value="ECO:0007669"/>
    <property type="project" value="InterPro"/>
</dbReference>
<dbReference type="GO" id="GO:0005506">
    <property type="term" value="F:iron ion binding"/>
    <property type="evidence" value="ECO:0007669"/>
    <property type="project" value="InterPro"/>
</dbReference>
<dbReference type="GO" id="GO:0004497">
    <property type="term" value="F:monooxygenase activity"/>
    <property type="evidence" value="ECO:0007669"/>
    <property type="project" value="InterPro"/>
</dbReference>
<dbReference type="GO" id="GO:0016705">
    <property type="term" value="F:oxidoreductase activity, acting on paired donors, with incorporation or reduction of molecular oxygen"/>
    <property type="evidence" value="ECO:0007669"/>
    <property type="project" value="InterPro"/>
</dbReference>
<dbReference type="GO" id="GO:0009058">
    <property type="term" value="P:biosynthetic process"/>
    <property type="evidence" value="ECO:0007669"/>
    <property type="project" value="UniProtKB-ARBA"/>
</dbReference>
<dbReference type="CDD" id="cd11062">
    <property type="entry name" value="CYP58-like"/>
    <property type="match status" value="1"/>
</dbReference>
<dbReference type="Gene3D" id="1.10.630.10">
    <property type="entry name" value="Cytochrome P450"/>
    <property type="match status" value="1"/>
</dbReference>
<dbReference type="InterPro" id="IPR001128">
    <property type="entry name" value="Cyt_P450"/>
</dbReference>
<dbReference type="InterPro" id="IPR017972">
    <property type="entry name" value="Cyt_P450_CS"/>
</dbReference>
<dbReference type="InterPro" id="IPR002401">
    <property type="entry name" value="Cyt_P450_E_grp-I"/>
</dbReference>
<dbReference type="InterPro" id="IPR036396">
    <property type="entry name" value="Cyt_P450_sf"/>
</dbReference>
<dbReference type="InterPro" id="IPR050121">
    <property type="entry name" value="Cytochrome_P450_monoxygenase"/>
</dbReference>
<dbReference type="PANTHER" id="PTHR24305">
    <property type="entry name" value="CYTOCHROME P450"/>
    <property type="match status" value="1"/>
</dbReference>
<dbReference type="PANTHER" id="PTHR24305:SF210">
    <property type="entry name" value="CYTOCHROME P450 MONOOXYGENASE ASQL-RELATED"/>
    <property type="match status" value="1"/>
</dbReference>
<dbReference type="Pfam" id="PF00067">
    <property type="entry name" value="p450"/>
    <property type="match status" value="1"/>
</dbReference>
<dbReference type="PRINTS" id="PR00463">
    <property type="entry name" value="EP450I"/>
</dbReference>
<dbReference type="PRINTS" id="PR00385">
    <property type="entry name" value="P450"/>
</dbReference>
<dbReference type="SUPFAM" id="SSF48264">
    <property type="entry name" value="Cytochrome P450"/>
    <property type="match status" value="1"/>
</dbReference>
<dbReference type="PROSITE" id="PS00086">
    <property type="entry name" value="CYTOCHROME_P450"/>
    <property type="match status" value="1"/>
</dbReference>
<feature type="chain" id="PRO_0000439117" description="Inactive cytochrome P450 monooxygenase cloA">
    <location>
        <begin position="1"/>
        <end position="511"/>
    </location>
</feature>
<feature type="transmembrane region" description="Helical" evidence="3">
    <location>
        <begin position="17"/>
        <end position="37"/>
    </location>
</feature>
<feature type="binding site" description="axial binding residue" evidence="1">
    <location>
        <position position="450"/>
    </location>
    <ligand>
        <name>heme</name>
        <dbReference type="ChEBI" id="CHEBI:30413"/>
    </ligand>
    <ligandPart>
        <name>Fe</name>
        <dbReference type="ChEBI" id="CHEBI:18248"/>
    </ligandPart>
</feature>
<feature type="glycosylation site" description="N-linked (GlcNAc...) asparagine" evidence="4">
    <location>
        <position position="81"/>
    </location>
</feature>
<feature type="glycosylation site" description="N-linked (GlcNAc...) asparagine" evidence="4">
    <location>
        <position position="344"/>
    </location>
</feature>
<comment type="function">
    <text evidence="2 5">Inactive cytochrome P450 monooxygenase; part of the gene cluster that mediates the biosynthesis of fungal ergot alkaloid (PubMed:17720822). DmaW catalyzes the first step of ergot alkaloid biosynthesis by condensing dimethylallyl diphosphate (DMAP) and tryptophan to form 4-dimethylallyl-L-tryptophan (By similarity). The second step is catalyzed by the methyltransferase easF that methylates 4-dimethylallyl-L-tryptophan in the presence of S-adenosyl-L-methionine, resulting in the formation of 4-dimethylallyl-L-abrine (By similarity). The catalase easC and the FAD-dependent oxidoreductase easE then transform 4-dimethylallyl-L-abrine to chanoclavine-I which is further oxidized by easD in the presence of NAD(+), resulting in the formation of chanoclavine-I aldehyde (By similarity). Agroclavine dehydrogenase easG then mediates the conversion of chanoclavine-I aldehyde to agroclavine via a non-enzymatic adduct reaction: the substrate is an iminium intermediate that is formed spontaneously from chanoclavine-I aldehyde in the presence of glutathione (By similarity). Further conversion of agroclavine to paspalic acid is a two-step process involving oxidation of agroclavine to elymoclavine and of elymoclavine to paspalic acid, the second step being performed by the elymoclavine oxidase cloA (PubMed:17720822). However, cloA does not encode a functional enzyme indicating that C.fusiformis terminates its ergot alkaloid pathway at elymoclavine (PubMed:17720822).</text>
</comment>
<comment type="cofactor">
    <cofactor evidence="1">
        <name>heme</name>
        <dbReference type="ChEBI" id="CHEBI:30413"/>
    </cofactor>
</comment>
<comment type="subcellular location">
    <subcellularLocation>
        <location evidence="3">Membrane</location>
        <topology evidence="3">Single-pass membrane protein</topology>
    </subcellularLocation>
</comment>
<comment type="miscellaneous">
    <text evidence="5">Even when expressed, does not show any monooxygenase activity (PubMed:17720822).</text>
</comment>
<comment type="similarity">
    <text evidence="7">Belongs to the cytochrome P450 family.</text>
</comment>
<sequence>MLLLWLYQALPTSLTRILLTAGLCVPCALVIHGIYNLYFHPLRNVPGPKLGALTDLYAFYWNWIRGVGYSKQFDRWHKHYNSSVIRIGPNDVHTTQVELYDVIHKAGSTWLKDKSFYKHFGGLDAMIDPREYRTYRTHLAPLYSQRAVDGLVSKMDDDLAICGQKTTKMAENGKAVNMARVLTTLSTSMILYNLFSMDISLWECNDYHPFLEAFEHIMAQIWLFLSYPRLATCLSLIPGTSLARLAPSWTTFMNSCAAWCDEDARKQRASDDQSIRDSHSKRYYALKHTDANDKKSIIPAPLDELFSFIAGGTDTTAYTTGCAFFYILSSPSVCRKLVKELDENASFIRNGLDYHKIQTLPYLNAVIKETLRISVPVPGCLPRVVPEGGITVGSFHLPAGTALSITQQAISLNQDIFPSPLCFSPERWIGPAAAGLDKWNVAFGRGSRQCIGTTLAYLELRCVVAYFFSRFDMTLTAKNGDGHRWVDRFVAVNLDTVEVLVLSDRWSGARY</sequence>
<organism>
    <name type="scientific">Claviceps fusiformis</name>
    <name type="common">Ergot fungus</name>
    <dbReference type="NCBI Taxonomy" id="40602"/>
    <lineage>
        <taxon>Eukaryota</taxon>
        <taxon>Fungi</taxon>
        <taxon>Dikarya</taxon>
        <taxon>Ascomycota</taxon>
        <taxon>Pezizomycotina</taxon>
        <taxon>Sordariomycetes</taxon>
        <taxon>Hypocreomycetidae</taxon>
        <taxon>Hypocreales</taxon>
        <taxon>Clavicipitaceae</taxon>
        <taxon>Claviceps</taxon>
    </lineage>
</organism>
<accession>A8C7R4</accession>
<gene>
    <name evidence="6" type="primary">cloA</name>
</gene>
<proteinExistence type="inferred from homology"/>
<evidence type="ECO:0000250" key="1">
    <source>
        <dbReference type="UniProtKB" id="P04798"/>
    </source>
</evidence>
<evidence type="ECO:0000250" key="2">
    <source>
        <dbReference type="UniProtKB" id="Q2PBY6"/>
    </source>
</evidence>
<evidence type="ECO:0000255" key="3"/>
<evidence type="ECO:0000255" key="4">
    <source>
        <dbReference type="PROSITE-ProRule" id="PRU00498"/>
    </source>
</evidence>
<evidence type="ECO:0000269" key="5">
    <source>
    </source>
</evidence>
<evidence type="ECO:0000303" key="6">
    <source>
    </source>
</evidence>
<evidence type="ECO:0000305" key="7"/>
<reference key="1">
    <citation type="journal article" date="2007" name="Appl. Environ. Microbiol.">
        <title>Comparison of ergot alkaloid biosynthesis gene clusters in Claviceps species indicates loss of late pathway steps in evolution of C. fusiformis.</title>
        <authorList>
            <person name="Lorenz N."/>
            <person name="Wilson E.V."/>
            <person name="Machado C."/>
            <person name="Schardl C.L."/>
            <person name="Tudzynski P."/>
        </authorList>
    </citation>
    <scope>NUCLEOTIDE SEQUENCE [GENOMIC DNA]</scope>
    <scope>FUNCTION</scope>
    <source>
        <strain>ATCC 26245 / DSM 2942 / CBS 164.59</strain>
    </source>
</reference>